<keyword id="KW-0044">Antibiotic</keyword>
<keyword id="KW-0929">Antimicrobial</keyword>
<keyword id="KW-0204">Cytolysis</keyword>
<keyword id="KW-0903">Direct protein sequencing</keyword>
<keyword id="KW-0354">Hemolysis</keyword>
<keyword id="KW-0964">Secreted</keyword>
<reference key="1">
    <citation type="journal article" date="2005" name="Toxicon">
        <title>Further isolation and characterization of grammistins from the skin secretion of the soapfish Grammistes sexlineatus.</title>
        <authorList>
            <person name="Sugiyama N."/>
            <person name="Araki M."/>
            <person name="Ishida M."/>
            <person name="Nagashima Y."/>
            <person name="Shiomi K."/>
        </authorList>
    </citation>
    <scope>PROTEIN SEQUENCE</scope>
    <source>
        <tissue>Skin secretion</tissue>
    </source>
</reference>
<organism>
    <name type="scientific">Grammistes sexlineatus</name>
    <name type="common">Goldenstriped soapfish</name>
    <name type="synonym">Perca sexlineata</name>
    <dbReference type="NCBI Taxonomy" id="270576"/>
    <lineage>
        <taxon>Eukaryota</taxon>
        <taxon>Metazoa</taxon>
        <taxon>Chordata</taxon>
        <taxon>Craniata</taxon>
        <taxon>Vertebrata</taxon>
        <taxon>Euteleostomi</taxon>
        <taxon>Actinopterygii</taxon>
        <taxon>Neopterygii</taxon>
        <taxon>Teleostei</taxon>
        <taxon>Neoteleostei</taxon>
        <taxon>Acanthomorphata</taxon>
        <taxon>Eupercaria</taxon>
        <taxon>Perciformes</taxon>
        <taxon>Serranoidei</taxon>
        <taxon>Serranidae</taxon>
        <taxon>Epinephelinae</taxon>
        <taxon>Grammistini</taxon>
        <taxon>Grammistes</taxon>
    </lineage>
</organism>
<feature type="peptide" id="PRO_0000044524" description="Grammistin Gs E">
    <location>
        <begin position="1"/>
        <end position="13"/>
    </location>
</feature>
<comment type="function">
    <text>Has lytic and hemolytic activities. Has antibacterial activity with a broad spectrum against various species of bacteria including both Gram-positive and Gram-negative groups.</text>
</comment>
<comment type="subcellular location">
    <subcellularLocation>
        <location>Secreted</location>
    </subcellularLocation>
</comment>
<comment type="tissue specificity">
    <text>Expressed by the skin glands.</text>
</comment>
<comment type="similarity">
    <text evidence="1">Belongs to the grammistin family. Group 2 subfamily.</text>
</comment>
<name>GRAE_GRASX</name>
<sequence>FIGGIISFIKKLF</sequence>
<accession>P69841</accession>
<evidence type="ECO:0000305" key="1"/>
<protein>
    <recommendedName>
        <fullName>Grammistin Gs E</fullName>
    </recommendedName>
</protein>
<proteinExistence type="evidence at protein level"/>
<dbReference type="GO" id="GO:0005576">
    <property type="term" value="C:extracellular region"/>
    <property type="evidence" value="ECO:0007669"/>
    <property type="project" value="UniProtKB-SubCell"/>
</dbReference>
<dbReference type="GO" id="GO:0042742">
    <property type="term" value="P:defense response to bacterium"/>
    <property type="evidence" value="ECO:0007669"/>
    <property type="project" value="UniProtKB-KW"/>
</dbReference>
<dbReference type="GO" id="GO:0031640">
    <property type="term" value="P:killing of cells of another organism"/>
    <property type="evidence" value="ECO:0007669"/>
    <property type="project" value="UniProtKB-KW"/>
</dbReference>